<comment type="function">
    <text evidence="1">Required for the formation of a threonylcarbamoyl group on adenosine at position 37 (t(6)A37) in tRNAs that read codons beginning with adenine. Catalyzes the conversion of L-threonine, HCO(3)(-)/CO(2) and ATP to give threonylcarbamoyl-AMP (TC-AMP) as the acyladenylate intermediate, with the release of diphosphate.</text>
</comment>
<comment type="catalytic activity">
    <reaction evidence="1">
        <text>L-threonine + hydrogencarbonate + ATP = L-threonylcarbamoyladenylate + diphosphate + H2O</text>
        <dbReference type="Rhea" id="RHEA:36407"/>
        <dbReference type="ChEBI" id="CHEBI:15377"/>
        <dbReference type="ChEBI" id="CHEBI:17544"/>
        <dbReference type="ChEBI" id="CHEBI:30616"/>
        <dbReference type="ChEBI" id="CHEBI:33019"/>
        <dbReference type="ChEBI" id="CHEBI:57926"/>
        <dbReference type="ChEBI" id="CHEBI:73682"/>
        <dbReference type="EC" id="2.7.7.87"/>
    </reaction>
</comment>
<comment type="subcellular location">
    <subcellularLocation>
        <location evidence="1">Cytoplasm</location>
    </subcellularLocation>
</comment>
<comment type="similarity">
    <text evidence="1">Belongs to the SUA5 family. TsaC subfamily.</text>
</comment>
<evidence type="ECO:0000255" key="1">
    <source>
        <dbReference type="HAMAP-Rule" id="MF_01852"/>
    </source>
</evidence>
<accession>Q83AA2</accession>
<feature type="chain" id="PRO_0000352907" description="Threonylcarbamoyl-AMP synthase">
    <location>
        <begin position="1"/>
        <end position="186"/>
    </location>
</feature>
<feature type="domain" description="YrdC-like" evidence="1">
    <location>
        <begin position="5"/>
        <end position="186"/>
    </location>
</feature>
<proteinExistence type="inferred from homology"/>
<protein>
    <recommendedName>
        <fullName evidence="1">Threonylcarbamoyl-AMP synthase</fullName>
        <shortName evidence="1">TC-AMP synthase</shortName>
        <ecNumber evidence="1">2.7.7.87</ecNumber>
    </recommendedName>
    <alternativeName>
        <fullName evidence="1">L-threonylcarbamoyladenylate synthase</fullName>
    </alternativeName>
    <alternativeName>
        <fullName evidence="1">t(6)A37 threonylcarbamoyladenosine biosynthesis protein TsaC</fullName>
    </alternativeName>
    <alternativeName>
        <fullName evidence="1">tRNA threonylcarbamoyladenosine biosynthesis protein TsaC</fullName>
    </alternativeName>
</protein>
<dbReference type="EC" id="2.7.7.87" evidence="1"/>
<dbReference type="EMBL" id="AE016828">
    <property type="protein sequence ID" value="AAO91492.1"/>
    <property type="molecule type" value="Genomic_DNA"/>
</dbReference>
<dbReference type="RefSeq" id="NP_820978.1">
    <property type="nucleotide sequence ID" value="NC_002971.3"/>
</dbReference>
<dbReference type="RefSeq" id="WP_005769752.1">
    <property type="nucleotide sequence ID" value="NC_002971.4"/>
</dbReference>
<dbReference type="SMR" id="Q83AA2"/>
<dbReference type="STRING" id="227377.CBU_2003"/>
<dbReference type="DNASU" id="1209916"/>
<dbReference type="EnsemblBacteria" id="AAO91492">
    <property type="protein sequence ID" value="AAO91492"/>
    <property type="gene ID" value="CBU_2003"/>
</dbReference>
<dbReference type="GeneID" id="1209916"/>
<dbReference type="KEGG" id="cbu:CBU_2003"/>
<dbReference type="PATRIC" id="fig|227377.7.peg.1990"/>
<dbReference type="eggNOG" id="COG0009">
    <property type="taxonomic scope" value="Bacteria"/>
</dbReference>
<dbReference type="HOGENOM" id="CLU_031397_6_0_6"/>
<dbReference type="OrthoDB" id="9814580at2"/>
<dbReference type="Proteomes" id="UP000002671">
    <property type="component" value="Chromosome"/>
</dbReference>
<dbReference type="GO" id="GO:0005737">
    <property type="term" value="C:cytoplasm"/>
    <property type="evidence" value="ECO:0000318"/>
    <property type="project" value="GO_Central"/>
</dbReference>
<dbReference type="GO" id="GO:0005524">
    <property type="term" value="F:ATP binding"/>
    <property type="evidence" value="ECO:0007669"/>
    <property type="project" value="UniProtKB-UniRule"/>
</dbReference>
<dbReference type="GO" id="GO:0003725">
    <property type="term" value="F:double-stranded RNA binding"/>
    <property type="evidence" value="ECO:0007669"/>
    <property type="project" value="InterPro"/>
</dbReference>
<dbReference type="GO" id="GO:0061710">
    <property type="term" value="F:L-threonylcarbamoyladenylate synthase"/>
    <property type="evidence" value="ECO:0007669"/>
    <property type="project" value="UniProtKB-EC"/>
</dbReference>
<dbReference type="GO" id="GO:0016779">
    <property type="term" value="F:nucleotidyltransferase activity"/>
    <property type="evidence" value="ECO:0000318"/>
    <property type="project" value="GO_Central"/>
</dbReference>
<dbReference type="GO" id="GO:0000049">
    <property type="term" value="F:tRNA binding"/>
    <property type="evidence" value="ECO:0000318"/>
    <property type="project" value="GO_Central"/>
</dbReference>
<dbReference type="GO" id="GO:0006450">
    <property type="term" value="P:regulation of translational fidelity"/>
    <property type="evidence" value="ECO:0000318"/>
    <property type="project" value="GO_Central"/>
</dbReference>
<dbReference type="GO" id="GO:0002949">
    <property type="term" value="P:tRNA threonylcarbamoyladenosine modification"/>
    <property type="evidence" value="ECO:0007669"/>
    <property type="project" value="UniProtKB-UniRule"/>
</dbReference>
<dbReference type="FunFam" id="3.90.870.10:FF:000004">
    <property type="entry name" value="Threonylcarbamoyl-AMP synthase"/>
    <property type="match status" value="1"/>
</dbReference>
<dbReference type="Gene3D" id="3.90.870.10">
    <property type="entry name" value="DHBP synthase"/>
    <property type="match status" value="1"/>
</dbReference>
<dbReference type="HAMAP" id="MF_01852">
    <property type="entry name" value="TsaC"/>
    <property type="match status" value="1"/>
</dbReference>
<dbReference type="InterPro" id="IPR017945">
    <property type="entry name" value="DHBP_synth_RibB-like_a/b_dom"/>
</dbReference>
<dbReference type="InterPro" id="IPR006070">
    <property type="entry name" value="Sua5-like_dom"/>
</dbReference>
<dbReference type="InterPro" id="IPR023535">
    <property type="entry name" value="TC-AMP_synthase"/>
</dbReference>
<dbReference type="InterPro" id="IPR050156">
    <property type="entry name" value="TC-AMP_synthase_SUA5"/>
</dbReference>
<dbReference type="NCBIfam" id="TIGR00057">
    <property type="entry name" value="L-threonylcarbamoyladenylate synthase"/>
    <property type="match status" value="1"/>
</dbReference>
<dbReference type="PANTHER" id="PTHR17490">
    <property type="entry name" value="SUA5"/>
    <property type="match status" value="1"/>
</dbReference>
<dbReference type="PANTHER" id="PTHR17490:SF18">
    <property type="entry name" value="THREONYLCARBAMOYL-AMP SYNTHASE"/>
    <property type="match status" value="1"/>
</dbReference>
<dbReference type="Pfam" id="PF01300">
    <property type="entry name" value="Sua5_yciO_yrdC"/>
    <property type="match status" value="1"/>
</dbReference>
<dbReference type="SUPFAM" id="SSF55821">
    <property type="entry name" value="YrdC/RibB"/>
    <property type="match status" value="1"/>
</dbReference>
<dbReference type="PROSITE" id="PS51163">
    <property type="entry name" value="YRDC"/>
    <property type="match status" value="1"/>
</dbReference>
<gene>
    <name evidence="1" type="primary">tsaC</name>
    <name type="synonym">rimN</name>
    <name type="ordered locus">CBU_2003</name>
</gene>
<name>TSAC_COXBU</name>
<organism>
    <name type="scientific">Coxiella burnetii (strain RSA 493 / Nine Mile phase I)</name>
    <dbReference type="NCBI Taxonomy" id="227377"/>
    <lineage>
        <taxon>Bacteria</taxon>
        <taxon>Pseudomonadati</taxon>
        <taxon>Pseudomonadota</taxon>
        <taxon>Gammaproteobacteria</taxon>
        <taxon>Legionellales</taxon>
        <taxon>Coxiellaceae</taxon>
        <taxon>Coxiella</taxon>
    </lineage>
</organism>
<keyword id="KW-0067">ATP-binding</keyword>
<keyword id="KW-0963">Cytoplasm</keyword>
<keyword id="KW-0547">Nucleotide-binding</keyword>
<keyword id="KW-0548">Nucleotidyltransferase</keyword>
<keyword id="KW-1185">Reference proteome</keyword>
<keyword id="KW-0808">Transferase</keyword>
<keyword id="KW-0819">tRNA processing</keyword>
<reference key="1">
    <citation type="journal article" date="2003" name="Proc. Natl. Acad. Sci. U.S.A.">
        <title>Complete genome sequence of the Q-fever pathogen, Coxiella burnetii.</title>
        <authorList>
            <person name="Seshadri R."/>
            <person name="Paulsen I.T."/>
            <person name="Eisen J.A."/>
            <person name="Read T.D."/>
            <person name="Nelson K.E."/>
            <person name="Nelson W.C."/>
            <person name="Ward N.L."/>
            <person name="Tettelin H."/>
            <person name="Davidsen T.M."/>
            <person name="Beanan M.J."/>
            <person name="DeBoy R.T."/>
            <person name="Daugherty S.C."/>
            <person name="Brinkac L.M."/>
            <person name="Madupu R."/>
            <person name="Dodson R.J."/>
            <person name="Khouri H.M."/>
            <person name="Lee K.H."/>
            <person name="Carty H.A."/>
            <person name="Scanlan D."/>
            <person name="Heinzen R.A."/>
            <person name="Thompson H.A."/>
            <person name="Samuel J.E."/>
            <person name="Fraser C.M."/>
            <person name="Heidelberg J.F."/>
        </authorList>
    </citation>
    <scope>NUCLEOTIDE SEQUENCE [LARGE SCALE GENOMIC DNA]</scope>
    <source>
        <strain>RSA 493 / Nine Mile phase I</strain>
    </source>
</reference>
<sequence length="186" mass="20569">MDDYTQSINDAVKCLRQGGVIAYPTEAVYGLGCDPFNHDAVAQLLTIKKRSIKKGFILIASEWKQVEPLTEPIDPKALARVFDTWPGPFTWTFPASKEAPHWITGQHSTIAIRVTAHPLAKLLCQRFAGPLISSSANQEGEPPIRDVKILRLVFGNKIDKILEGPLGPTHRPTPIRDAITGEILRL</sequence>